<feature type="chain" id="PRO_1000086432" description="Large ribosomal subunit protein uL3">
    <location>
        <begin position="1"/>
        <end position="209"/>
    </location>
</feature>
<feature type="region of interest" description="Disordered" evidence="2">
    <location>
        <begin position="128"/>
        <end position="154"/>
    </location>
</feature>
<dbReference type="EMBL" id="CP000721">
    <property type="protein sequence ID" value="ABR32341.1"/>
    <property type="molecule type" value="Genomic_DNA"/>
</dbReference>
<dbReference type="RefSeq" id="WP_011967511.1">
    <property type="nucleotide sequence ID" value="NC_009617.1"/>
</dbReference>
<dbReference type="SMR" id="A6LPR1"/>
<dbReference type="GeneID" id="66343041"/>
<dbReference type="KEGG" id="cbe:Cbei_0151"/>
<dbReference type="eggNOG" id="COG0087">
    <property type="taxonomic scope" value="Bacteria"/>
</dbReference>
<dbReference type="HOGENOM" id="CLU_044142_4_1_9"/>
<dbReference type="Proteomes" id="UP000000565">
    <property type="component" value="Chromosome"/>
</dbReference>
<dbReference type="GO" id="GO:0022625">
    <property type="term" value="C:cytosolic large ribosomal subunit"/>
    <property type="evidence" value="ECO:0007669"/>
    <property type="project" value="TreeGrafter"/>
</dbReference>
<dbReference type="GO" id="GO:0019843">
    <property type="term" value="F:rRNA binding"/>
    <property type="evidence" value="ECO:0007669"/>
    <property type="project" value="UniProtKB-UniRule"/>
</dbReference>
<dbReference type="GO" id="GO:0003735">
    <property type="term" value="F:structural constituent of ribosome"/>
    <property type="evidence" value="ECO:0007669"/>
    <property type="project" value="InterPro"/>
</dbReference>
<dbReference type="GO" id="GO:0006412">
    <property type="term" value="P:translation"/>
    <property type="evidence" value="ECO:0007669"/>
    <property type="project" value="UniProtKB-UniRule"/>
</dbReference>
<dbReference type="FunFam" id="2.40.30.10:FF:000004">
    <property type="entry name" value="50S ribosomal protein L3"/>
    <property type="match status" value="1"/>
</dbReference>
<dbReference type="FunFam" id="3.30.160.810:FF:000001">
    <property type="entry name" value="50S ribosomal protein L3"/>
    <property type="match status" value="1"/>
</dbReference>
<dbReference type="Gene3D" id="3.30.160.810">
    <property type="match status" value="1"/>
</dbReference>
<dbReference type="Gene3D" id="2.40.30.10">
    <property type="entry name" value="Translation factors"/>
    <property type="match status" value="1"/>
</dbReference>
<dbReference type="HAMAP" id="MF_01325_B">
    <property type="entry name" value="Ribosomal_uL3_B"/>
    <property type="match status" value="1"/>
</dbReference>
<dbReference type="InterPro" id="IPR000597">
    <property type="entry name" value="Ribosomal_uL3"/>
</dbReference>
<dbReference type="InterPro" id="IPR019927">
    <property type="entry name" value="Ribosomal_uL3_bac/org-type"/>
</dbReference>
<dbReference type="InterPro" id="IPR019926">
    <property type="entry name" value="Ribosomal_uL3_CS"/>
</dbReference>
<dbReference type="InterPro" id="IPR009000">
    <property type="entry name" value="Transl_B-barrel_sf"/>
</dbReference>
<dbReference type="NCBIfam" id="TIGR03625">
    <property type="entry name" value="L3_bact"/>
    <property type="match status" value="1"/>
</dbReference>
<dbReference type="PANTHER" id="PTHR11229">
    <property type="entry name" value="50S RIBOSOMAL PROTEIN L3"/>
    <property type="match status" value="1"/>
</dbReference>
<dbReference type="PANTHER" id="PTHR11229:SF16">
    <property type="entry name" value="LARGE RIBOSOMAL SUBUNIT PROTEIN UL3C"/>
    <property type="match status" value="1"/>
</dbReference>
<dbReference type="Pfam" id="PF00297">
    <property type="entry name" value="Ribosomal_L3"/>
    <property type="match status" value="1"/>
</dbReference>
<dbReference type="SUPFAM" id="SSF50447">
    <property type="entry name" value="Translation proteins"/>
    <property type="match status" value="1"/>
</dbReference>
<dbReference type="PROSITE" id="PS00474">
    <property type="entry name" value="RIBOSOMAL_L3"/>
    <property type="match status" value="1"/>
</dbReference>
<keyword id="KW-0687">Ribonucleoprotein</keyword>
<keyword id="KW-0689">Ribosomal protein</keyword>
<keyword id="KW-0694">RNA-binding</keyword>
<keyword id="KW-0699">rRNA-binding</keyword>
<protein>
    <recommendedName>
        <fullName evidence="1">Large ribosomal subunit protein uL3</fullName>
    </recommendedName>
    <alternativeName>
        <fullName evidence="3">50S ribosomal protein L3</fullName>
    </alternativeName>
</protein>
<organism>
    <name type="scientific">Clostridium beijerinckii (strain ATCC 51743 / NCIMB 8052)</name>
    <name type="common">Clostridium acetobutylicum</name>
    <dbReference type="NCBI Taxonomy" id="290402"/>
    <lineage>
        <taxon>Bacteria</taxon>
        <taxon>Bacillati</taxon>
        <taxon>Bacillota</taxon>
        <taxon>Clostridia</taxon>
        <taxon>Eubacteriales</taxon>
        <taxon>Clostridiaceae</taxon>
        <taxon>Clostridium</taxon>
    </lineage>
</organism>
<comment type="function">
    <text evidence="1">One of the primary rRNA binding proteins, it binds directly near the 3'-end of the 23S rRNA, where it nucleates assembly of the 50S subunit.</text>
</comment>
<comment type="subunit">
    <text evidence="1">Part of the 50S ribosomal subunit. Forms a cluster with proteins L14 and L19.</text>
</comment>
<comment type="similarity">
    <text evidence="1">Belongs to the universal ribosomal protein uL3 family.</text>
</comment>
<reference key="1">
    <citation type="submission" date="2007-06" db="EMBL/GenBank/DDBJ databases">
        <title>Complete sequence of Clostridium beijerinckii NCIMB 8052.</title>
        <authorList>
            <consortium name="US DOE Joint Genome Institute"/>
            <person name="Copeland A."/>
            <person name="Lucas S."/>
            <person name="Lapidus A."/>
            <person name="Barry K."/>
            <person name="Detter J.C."/>
            <person name="Glavina del Rio T."/>
            <person name="Hammon N."/>
            <person name="Israni S."/>
            <person name="Dalin E."/>
            <person name="Tice H."/>
            <person name="Pitluck S."/>
            <person name="Sims D."/>
            <person name="Brettin T."/>
            <person name="Bruce D."/>
            <person name="Tapia R."/>
            <person name="Brainard J."/>
            <person name="Schmutz J."/>
            <person name="Larimer F."/>
            <person name="Land M."/>
            <person name="Hauser L."/>
            <person name="Kyrpides N."/>
            <person name="Mikhailova N."/>
            <person name="Bennet G."/>
            <person name="Cann I."/>
            <person name="Chen J.-S."/>
            <person name="Contreras A.L."/>
            <person name="Jones D."/>
            <person name="Kashket E."/>
            <person name="Mitchell W."/>
            <person name="Stoddard S."/>
            <person name="Schwarz W."/>
            <person name="Qureshi N."/>
            <person name="Young M."/>
            <person name="Shi Z."/>
            <person name="Ezeji T."/>
            <person name="White B."/>
            <person name="Blaschek H."/>
            <person name="Richardson P."/>
        </authorList>
    </citation>
    <scope>NUCLEOTIDE SEQUENCE [LARGE SCALE GENOMIC DNA]</scope>
    <source>
        <strain>ATCC 51743 / NCIMB 8052</strain>
    </source>
</reference>
<proteinExistence type="inferred from homology"/>
<evidence type="ECO:0000255" key="1">
    <source>
        <dbReference type="HAMAP-Rule" id="MF_01325"/>
    </source>
</evidence>
<evidence type="ECO:0000256" key="2">
    <source>
        <dbReference type="SAM" id="MobiDB-lite"/>
    </source>
</evidence>
<evidence type="ECO:0000305" key="3"/>
<accession>A6LPR1</accession>
<sequence>MKKAIIGRKVGMTQIFDEKGKVIPVTVVEAGPCVVVQKKTLENDGYEAIQVGFDEIREKLANKPRKGHFAKAGATLRRTLKEFRLDDISQYEVGNEIKADVFGAGDKVDVSAVSKGKGFQGSIKRWNQQRGPMTHGSKFHRAPGSMGASSDPSRTFKNKRMPGHMGSVNTTVLNLEVVKVIAEKNLILIKGGIPGPNKGTVVIKDTVRA</sequence>
<name>RL3_CLOB8</name>
<gene>
    <name evidence="1" type="primary">rplC</name>
    <name type="ordered locus">Cbei_0151</name>
</gene>